<comment type="function">
    <text evidence="1">Catalyzes the base-exchange of a guanine (G) residue with the queuine precursor 7-aminomethyl-7-deazaguanine (PreQ1) at position 34 (anticodon wobble position) in tRNAs with GU(N) anticodons (tRNA-Asp, -Asn, -His and -Tyr). Catalysis occurs through a double-displacement mechanism. The nucleophile active site attacks the C1' of nucleotide 34 to detach the guanine base from the RNA, forming a covalent enzyme-RNA intermediate. The proton acceptor active site deprotonates the incoming PreQ1, allowing a nucleophilic attack on the C1' of the ribose to form the product. After dissociation, two additional enzymatic reactions on the tRNA convert PreQ1 to queuine (Q), resulting in the hypermodified nucleoside queuosine (7-(((4,5-cis-dihydroxy-2-cyclopenten-1-yl)amino)methyl)-7-deazaguanosine).</text>
</comment>
<comment type="catalytic activity">
    <reaction evidence="1">
        <text>7-aminomethyl-7-carbaguanine + guanosine(34) in tRNA = 7-aminomethyl-7-carbaguanosine(34) in tRNA + guanine</text>
        <dbReference type="Rhea" id="RHEA:24104"/>
        <dbReference type="Rhea" id="RHEA-COMP:10341"/>
        <dbReference type="Rhea" id="RHEA-COMP:10342"/>
        <dbReference type="ChEBI" id="CHEBI:16235"/>
        <dbReference type="ChEBI" id="CHEBI:58703"/>
        <dbReference type="ChEBI" id="CHEBI:74269"/>
        <dbReference type="ChEBI" id="CHEBI:82833"/>
        <dbReference type="EC" id="2.4.2.29"/>
    </reaction>
</comment>
<comment type="cofactor">
    <cofactor evidence="1">
        <name>Zn(2+)</name>
        <dbReference type="ChEBI" id="CHEBI:29105"/>
    </cofactor>
    <text evidence="1">Binds 1 zinc ion per subunit.</text>
</comment>
<comment type="pathway">
    <text evidence="1">tRNA modification; tRNA-queuosine biosynthesis.</text>
</comment>
<comment type="subunit">
    <text evidence="1">Homodimer. Within each dimer, one monomer is responsible for RNA recognition and catalysis, while the other monomer binds to the replacement base PreQ1.</text>
</comment>
<comment type="similarity">
    <text evidence="1">Belongs to the queuine tRNA-ribosyltransferase family.</text>
</comment>
<keyword id="KW-0328">Glycosyltransferase</keyword>
<keyword id="KW-0479">Metal-binding</keyword>
<keyword id="KW-0671">Queuosine biosynthesis</keyword>
<keyword id="KW-0808">Transferase</keyword>
<keyword id="KW-0819">tRNA processing</keyword>
<keyword id="KW-0862">Zinc</keyword>
<name>TGT_SHESW</name>
<protein>
    <recommendedName>
        <fullName evidence="1">Queuine tRNA-ribosyltransferase</fullName>
        <ecNumber evidence="1">2.4.2.29</ecNumber>
    </recommendedName>
    <alternativeName>
        <fullName evidence="1">Guanine insertion enzyme</fullName>
    </alternativeName>
    <alternativeName>
        <fullName evidence="1">tRNA-guanine transglycosylase</fullName>
    </alternativeName>
</protein>
<proteinExistence type="inferred from homology"/>
<evidence type="ECO:0000255" key="1">
    <source>
        <dbReference type="HAMAP-Rule" id="MF_00168"/>
    </source>
</evidence>
<dbReference type="EC" id="2.4.2.29" evidence="1"/>
<dbReference type="EMBL" id="CP000503">
    <property type="protein sequence ID" value="ABM24362.1"/>
    <property type="molecule type" value="Genomic_DNA"/>
</dbReference>
<dbReference type="RefSeq" id="WP_011788863.1">
    <property type="nucleotide sequence ID" value="NC_008750.1"/>
</dbReference>
<dbReference type="SMR" id="A1RI67"/>
<dbReference type="GeneID" id="67444071"/>
<dbReference type="KEGG" id="shw:Sputw3181_1524"/>
<dbReference type="HOGENOM" id="CLU_022060_0_1_6"/>
<dbReference type="UniPathway" id="UPA00392"/>
<dbReference type="Proteomes" id="UP000002597">
    <property type="component" value="Chromosome"/>
</dbReference>
<dbReference type="GO" id="GO:0005829">
    <property type="term" value="C:cytosol"/>
    <property type="evidence" value="ECO:0007669"/>
    <property type="project" value="TreeGrafter"/>
</dbReference>
<dbReference type="GO" id="GO:0046872">
    <property type="term" value="F:metal ion binding"/>
    <property type="evidence" value="ECO:0007669"/>
    <property type="project" value="UniProtKB-KW"/>
</dbReference>
<dbReference type="GO" id="GO:0008479">
    <property type="term" value="F:tRNA-guanosine(34) queuine transglycosylase activity"/>
    <property type="evidence" value="ECO:0007669"/>
    <property type="project" value="UniProtKB-UniRule"/>
</dbReference>
<dbReference type="GO" id="GO:0008616">
    <property type="term" value="P:queuosine biosynthetic process"/>
    <property type="evidence" value="ECO:0007669"/>
    <property type="project" value="UniProtKB-UniRule"/>
</dbReference>
<dbReference type="GO" id="GO:0002099">
    <property type="term" value="P:tRNA wobble guanine modification"/>
    <property type="evidence" value="ECO:0007669"/>
    <property type="project" value="TreeGrafter"/>
</dbReference>
<dbReference type="GO" id="GO:0101030">
    <property type="term" value="P:tRNA-guanine transglycosylation"/>
    <property type="evidence" value="ECO:0007669"/>
    <property type="project" value="InterPro"/>
</dbReference>
<dbReference type="FunFam" id="3.20.20.105:FF:000001">
    <property type="entry name" value="Queuine tRNA-ribosyltransferase"/>
    <property type="match status" value="1"/>
</dbReference>
<dbReference type="Gene3D" id="3.20.20.105">
    <property type="entry name" value="Queuine tRNA-ribosyltransferase-like"/>
    <property type="match status" value="1"/>
</dbReference>
<dbReference type="HAMAP" id="MF_00168">
    <property type="entry name" value="Q_tRNA_Tgt"/>
    <property type="match status" value="1"/>
</dbReference>
<dbReference type="InterPro" id="IPR050076">
    <property type="entry name" value="ArchSynthase1/Queuine_TRR"/>
</dbReference>
<dbReference type="InterPro" id="IPR004803">
    <property type="entry name" value="TGT"/>
</dbReference>
<dbReference type="InterPro" id="IPR036511">
    <property type="entry name" value="TGT-like_sf"/>
</dbReference>
<dbReference type="InterPro" id="IPR002616">
    <property type="entry name" value="tRNA_ribo_trans-like"/>
</dbReference>
<dbReference type="NCBIfam" id="TIGR00430">
    <property type="entry name" value="Q_tRNA_tgt"/>
    <property type="match status" value="1"/>
</dbReference>
<dbReference type="NCBIfam" id="TIGR00449">
    <property type="entry name" value="tgt_general"/>
    <property type="match status" value="1"/>
</dbReference>
<dbReference type="PANTHER" id="PTHR46499">
    <property type="entry name" value="QUEUINE TRNA-RIBOSYLTRANSFERASE"/>
    <property type="match status" value="1"/>
</dbReference>
<dbReference type="PANTHER" id="PTHR46499:SF1">
    <property type="entry name" value="QUEUINE TRNA-RIBOSYLTRANSFERASE"/>
    <property type="match status" value="1"/>
</dbReference>
<dbReference type="Pfam" id="PF01702">
    <property type="entry name" value="TGT"/>
    <property type="match status" value="1"/>
</dbReference>
<dbReference type="SUPFAM" id="SSF51713">
    <property type="entry name" value="tRNA-guanine transglycosylase"/>
    <property type="match status" value="1"/>
</dbReference>
<sequence>MKFELDTTDGRARRGRLIFDRGTVETPAFMPVGTYGTVKGMTPEEVRATGADILLGNTFHLWLRPGEEIMRKHGDLHDFMNWQRPILTDSGGFQVFSLGDIRKITEEGVHFRSPINGEKIFLDPEKSMQIQDALGSDVVMIFDECTPYPATEDEARKSMQMSLRWAKRSRDEFDRLKNPNSLFGIIQGGVYEDLRDESLKGLVEIGFDGYAVGGLAVGEPKADMHRILEHICPQIPADKPRYLMGVGKPEDLVEGVRRGVDMFDCVMPTRNARNGHLFTSEGVIKIRNARHRDDTSPLDTKCDCYTCKNYSRAYLYHLDRCNEILGARLNTIHNLRYYQMLMEGLRGAIETGTLDAFVADFYTSQGREVPELVD</sequence>
<organism>
    <name type="scientific">Shewanella sp. (strain W3-18-1)</name>
    <dbReference type="NCBI Taxonomy" id="351745"/>
    <lineage>
        <taxon>Bacteria</taxon>
        <taxon>Pseudomonadati</taxon>
        <taxon>Pseudomonadota</taxon>
        <taxon>Gammaproteobacteria</taxon>
        <taxon>Alteromonadales</taxon>
        <taxon>Shewanellaceae</taxon>
        <taxon>Shewanella</taxon>
    </lineage>
</organism>
<accession>A1RI67</accession>
<feature type="chain" id="PRO_1000016853" description="Queuine tRNA-ribosyltransferase">
    <location>
        <begin position="1"/>
        <end position="374"/>
    </location>
</feature>
<feature type="region of interest" description="RNA binding" evidence="1">
    <location>
        <begin position="245"/>
        <end position="251"/>
    </location>
</feature>
<feature type="region of interest" description="RNA binding; important for wobble base 34 recognition" evidence="1">
    <location>
        <begin position="269"/>
        <end position="273"/>
    </location>
</feature>
<feature type="active site" description="Proton acceptor" evidence="1">
    <location>
        <position position="89"/>
    </location>
</feature>
<feature type="active site" description="Nucleophile" evidence="1">
    <location>
        <position position="264"/>
    </location>
</feature>
<feature type="binding site" evidence="1">
    <location>
        <begin position="89"/>
        <end position="93"/>
    </location>
    <ligand>
        <name>substrate</name>
    </ligand>
</feature>
<feature type="binding site" evidence="1">
    <location>
        <position position="143"/>
    </location>
    <ligand>
        <name>substrate</name>
    </ligand>
</feature>
<feature type="binding site" evidence="1">
    <location>
        <position position="187"/>
    </location>
    <ligand>
        <name>substrate</name>
    </ligand>
</feature>
<feature type="binding site" evidence="1">
    <location>
        <position position="214"/>
    </location>
    <ligand>
        <name>substrate</name>
    </ligand>
</feature>
<feature type="binding site" evidence="1">
    <location>
        <position position="302"/>
    </location>
    <ligand>
        <name>Zn(2+)</name>
        <dbReference type="ChEBI" id="CHEBI:29105"/>
    </ligand>
</feature>
<feature type="binding site" evidence="1">
    <location>
        <position position="304"/>
    </location>
    <ligand>
        <name>Zn(2+)</name>
        <dbReference type="ChEBI" id="CHEBI:29105"/>
    </ligand>
</feature>
<feature type="binding site" evidence="1">
    <location>
        <position position="307"/>
    </location>
    <ligand>
        <name>Zn(2+)</name>
        <dbReference type="ChEBI" id="CHEBI:29105"/>
    </ligand>
</feature>
<feature type="binding site" evidence="1">
    <location>
        <position position="333"/>
    </location>
    <ligand>
        <name>Zn(2+)</name>
        <dbReference type="ChEBI" id="CHEBI:29105"/>
    </ligand>
</feature>
<reference key="1">
    <citation type="submission" date="2006-12" db="EMBL/GenBank/DDBJ databases">
        <title>Complete sequence of Shewanella sp. W3-18-1.</title>
        <authorList>
            <consortium name="US DOE Joint Genome Institute"/>
            <person name="Copeland A."/>
            <person name="Lucas S."/>
            <person name="Lapidus A."/>
            <person name="Barry K."/>
            <person name="Detter J.C."/>
            <person name="Glavina del Rio T."/>
            <person name="Hammon N."/>
            <person name="Israni S."/>
            <person name="Dalin E."/>
            <person name="Tice H."/>
            <person name="Pitluck S."/>
            <person name="Chain P."/>
            <person name="Malfatti S."/>
            <person name="Shin M."/>
            <person name="Vergez L."/>
            <person name="Schmutz J."/>
            <person name="Larimer F."/>
            <person name="Land M."/>
            <person name="Hauser L."/>
            <person name="Kyrpides N."/>
            <person name="Lykidis A."/>
            <person name="Tiedje J."/>
            <person name="Richardson P."/>
        </authorList>
    </citation>
    <scope>NUCLEOTIDE SEQUENCE [LARGE SCALE GENOMIC DNA]</scope>
    <source>
        <strain>W3-18-1</strain>
    </source>
</reference>
<gene>
    <name evidence="1" type="primary">tgt</name>
    <name type="ordered locus">Sputw3181_1524</name>
</gene>